<organism>
    <name type="scientific">Staphylococcus aureus (strain USA300)</name>
    <dbReference type="NCBI Taxonomy" id="367830"/>
    <lineage>
        <taxon>Bacteria</taxon>
        <taxon>Bacillati</taxon>
        <taxon>Bacillota</taxon>
        <taxon>Bacilli</taxon>
        <taxon>Bacillales</taxon>
        <taxon>Staphylococcaceae</taxon>
        <taxon>Staphylococcus</taxon>
    </lineage>
</organism>
<dbReference type="EC" id="6.2.1.5" evidence="1"/>
<dbReference type="EMBL" id="CP000255">
    <property type="protein sequence ID" value="ABD21246.1"/>
    <property type="molecule type" value="Genomic_DNA"/>
</dbReference>
<dbReference type="RefSeq" id="WP_001020801.1">
    <property type="nucleotide sequence ID" value="NZ_CP027476.1"/>
</dbReference>
<dbReference type="SMR" id="Q2FHJ3"/>
<dbReference type="KEGG" id="saa:SAUSA300_1138"/>
<dbReference type="HOGENOM" id="CLU_037430_0_2_9"/>
<dbReference type="OMA" id="ITACDEV"/>
<dbReference type="UniPathway" id="UPA00223">
    <property type="reaction ID" value="UER00999"/>
</dbReference>
<dbReference type="Proteomes" id="UP000001939">
    <property type="component" value="Chromosome"/>
</dbReference>
<dbReference type="GO" id="GO:0005829">
    <property type="term" value="C:cytosol"/>
    <property type="evidence" value="ECO:0007669"/>
    <property type="project" value="TreeGrafter"/>
</dbReference>
<dbReference type="GO" id="GO:0042709">
    <property type="term" value="C:succinate-CoA ligase complex"/>
    <property type="evidence" value="ECO:0007669"/>
    <property type="project" value="TreeGrafter"/>
</dbReference>
<dbReference type="GO" id="GO:0005524">
    <property type="term" value="F:ATP binding"/>
    <property type="evidence" value="ECO:0007669"/>
    <property type="project" value="UniProtKB-UniRule"/>
</dbReference>
<dbReference type="GO" id="GO:0000287">
    <property type="term" value="F:magnesium ion binding"/>
    <property type="evidence" value="ECO:0007669"/>
    <property type="project" value="UniProtKB-UniRule"/>
</dbReference>
<dbReference type="GO" id="GO:0004775">
    <property type="term" value="F:succinate-CoA ligase (ADP-forming) activity"/>
    <property type="evidence" value="ECO:0007669"/>
    <property type="project" value="UniProtKB-UniRule"/>
</dbReference>
<dbReference type="GO" id="GO:0004776">
    <property type="term" value="F:succinate-CoA ligase (GDP-forming) activity"/>
    <property type="evidence" value="ECO:0007669"/>
    <property type="project" value="RHEA"/>
</dbReference>
<dbReference type="GO" id="GO:0006104">
    <property type="term" value="P:succinyl-CoA metabolic process"/>
    <property type="evidence" value="ECO:0007669"/>
    <property type="project" value="TreeGrafter"/>
</dbReference>
<dbReference type="GO" id="GO:0006099">
    <property type="term" value="P:tricarboxylic acid cycle"/>
    <property type="evidence" value="ECO:0007669"/>
    <property type="project" value="UniProtKB-UniRule"/>
</dbReference>
<dbReference type="FunFam" id="3.30.1490.20:FF:000002">
    <property type="entry name" value="Succinate--CoA ligase [ADP-forming] subunit beta"/>
    <property type="match status" value="1"/>
</dbReference>
<dbReference type="FunFam" id="3.30.470.20:FF:000002">
    <property type="entry name" value="Succinate--CoA ligase [ADP-forming] subunit beta"/>
    <property type="match status" value="1"/>
</dbReference>
<dbReference type="FunFam" id="3.40.50.261:FF:000001">
    <property type="entry name" value="Succinate--CoA ligase [ADP-forming] subunit beta"/>
    <property type="match status" value="1"/>
</dbReference>
<dbReference type="Gene3D" id="3.30.1490.20">
    <property type="entry name" value="ATP-grasp fold, A domain"/>
    <property type="match status" value="1"/>
</dbReference>
<dbReference type="Gene3D" id="3.30.470.20">
    <property type="entry name" value="ATP-grasp fold, B domain"/>
    <property type="match status" value="1"/>
</dbReference>
<dbReference type="Gene3D" id="3.40.50.261">
    <property type="entry name" value="Succinyl-CoA synthetase domains"/>
    <property type="match status" value="1"/>
</dbReference>
<dbReference type="HAMAP" id="MF_00558">
    <property type="entry name" value="Succ_CoA_beta"/>
    <property type="match status" value="1"/>
</dbReference>
<dbReference type="InterPro" id="IPR011761">
    <property type="entry name" value="ATP-grasp"/>
</dbReference>
<dbReference type="InterPro" id="IPR013650">
    <property type="entry name" value="ATP-grasp_succ-CoA_synth-type"/>
</dbReference>
<dbReference type="InterPro" id="IPR013815">
    <property type="entry name" value="ATP_grasp_subdomain_1"/>
</dbReference>
<dbReference type="InterPro" id="IPR017866">
    <property type="entry name" value="Succ-CoA_synthase_bsu_CS"/>
</dbReference>
<dbReference type="InterPro" id="IPR005811">
    <property type="entry name" value="SUCC_ACL_C"/>
</dbReference>
<dbReference type="InterPro" id="IPR005809">
    <property type="entry name" value="Succ_CoA_ligase-like_bsu"/>
</dbReference>
<dbReference type="InterPro" id="IPR016102">
    <property type="entry name" value="Succinyl-CoA_synth-like"/>
</dbReference>
<dbReference type="NCBIfam" id="NF001913">
    <property type="entry name" value="PRK00696.1"/>
    <property type="match status" value="1"/>
</dbReference>
<dbReference type="NCBIfam" id="TIGR01016">
    <property type="entry name" value="sucCoAbeta"/>
    <property type="match status" value="1"/>
</dbReference>
<dbReference type="PANTHER" id="PTHR11815:SF10">
    <property type="entry name" value="SUCCINATE--COA LIGASE [GDP-FORMING] SUBUNIT BETA, MITOCHONDRIAL"/>
    <property type="match status" value="1"/>
</dbReference>
<dbReference type="PANTHER" id="PTHR11815">
    <property type="entry name" value="SUCCINYL-COA SYNTHETASE BETA CHAIN"/>
    <property type="match status" value="1"/>
</dbReference>
<dbReference type="Pfam" id="PF08442">
    <property type="entry name" value="ATP-grasp_2"/>
    <property type="match status" value="1"/>
</dbReference>
<dbReference type="Pfam" id="PF00549">
    <property type="entry name" value="Ligase_CoA"/>
    <property type="match status" value="1"/>
</dbReference>
<dbReference type="PIRSF" id="PIRSF001554">
    <property type="entry name" value="SucCS_beta"/>
    <property type="match status" value="1"/>
</dbReference>
<dbReference type="SUPFAM" id="SSF56059">
    <property type="entry name" value="Glutathione synthetase ATP-binding domain-like"/>
    <property type="match status" value="1"/>
</dbReference>
<dbReference type="SUPFAM" id="SSF52210">
    <property type="entry name" value="Succinyl-CoA synthetase domains"/>
    <property type="match status" value="1"/>
</dbReference>
<dbReference type="PROSITE" id="PS50975">
    <property type="entry name" value="ATP_GRASP"/>
    <property type="match status" value="1"/>
</dbReference>
<dbReference type="PROSITE" id="PS01217">
    <property type="entry name" value="SUCCINYL_COA_LIG_3"/>
    <property type="match status" value="1"/>
</dbReference>
<proteinExistence type="inferred from homology"/>
<name>SUCC_STAA3</name>
<sequence length="388" mass="42056">MNIHEYQGKEIFRSMGVAVPEGRVAFTAEEAVEKAKELNSDVYVVKAQIHAGGRGKAGGVKIAKSLSEVETYAKELLGKTLVTHQTGPEGKEIKRLYIEEGCAIQKEYYVGFVIDRATDQVTLMASEEGGTEIEEVAAKTPEKIFKETIDPVIGLSPFQARRIAFNINIPKESVNKAAKFLLALYNVFIEKDCSIVEINPLVTTADGDVLALDAKINFDDNALFRHKDVVELRDLEEEDPKEIEASKHDLSYIALDGDIGCMVNGAGLAMATMDTINHFGGNPANFLDAGGSATREKVTEAFKIILGDENVKGIFVNIFGGIMKCDVIAEGIVEAVKEVDLTLPLVVRLEGTNVELGKKILKDSGLAIEPAATMAEGAQKIVKLVKEA</sequence>
<comment type="function">
    <text evidence="1">Succinyl-CoA synthetase functions in the citric acid cycle (TCA), coupling the hydrolysis of succinyl-CoA to the synthesis of either ATP or GTP and thus represents the only step of substrate-level phosphorylation in the TCA. The beta subunit provides nucleotide specificity of the enzyme and binds the substrate succinate, while the binding sites for coenzyme A and phosphate are found in the alpha subunit.</text>
</comment>
<comment type="catalytic activity">
    <reaction evidence="1">
        <text>succinate + ATP + CoA = succinyl-CoA + ADP + phosphate</text>
        <dbReference type="Rhea" id="RHEA:17661"/>
        <dbReference type="ChEBI" id="CHEBI:30031"/>
        <dbReference type="ChEBI" id="CHEBI:30616"/>
        <dbReference type="ChEBI" id="CHEBI:43474"/>
        <dbReference type="ChEBI" id="CHEBI:57287"/>
        <dbReference type="ChEBI" id="CHEBI:57292"/>
        <dbReference type="ChEBI" id="CHEBI:456216"/>
        <dbReference type="EC" id="6.2.1.5"/>
    </reaction>
    <physiologicalReaction direction="right-to-left" evidence="1">
        <dbReference type="Rhea" id="RHEA:17663"/>
    </physiologicalReaction>
</comment>
<comment type="catalytic activity">
    <reaction evidence="1">
        <text>GTP + succinate + CoA = succinyl-CoA + GDP + phosphate</text>
        <dbReference type="Rhea" id="RHEA:22120"/>
        <dbReference type="ChEBI" id="CHEBI:30031"/>
        <dbReference type="ChEBI" id="CHEBI:37565"/>
        <dbReference type="ChEBI" id="CHEBI:43474"/>
        <dbReference type="ChEBI" id="CHEBI:57287"/>
        <dbReference type="ChEBI" id="CHEBI:57292"/>
        <dbReference type="ChEBI" id="CHEBI:58189"/>
    </reaction>
    <physiologicalReaction direction="right-to-left" evidence="1">
        <dbReference type="Rhea" id="RHEA:22122"/>
    </physiologicalReaction>
</comment>
<comment type="cofactor">
    <cofactor evidence="1">
        <name>Mg(2+)</name>
        <dbReference type="ChEBI" id="CHEBI:18420"/>
    </cofactor>
    <text evidence="1">Binds 1 Mg(2+) ion per subunit.</text>
</comment>
<comment type="pathway">
    <text evidence="1">Carbohydrate metabolism; tricarboxylic acid cycle; succinate from succinyl-CoA (ligase route): step 1/1.</text>
</comment>
<comment type="subunit">
    <text evidence="1">Heterotetramer of two alpha and two beta subunits.</text>
</comment>
<comment type="similarity">
    <text evidence="1">Belongs to the succinate/malate CoA ligase beta subunit family.</text>
</comment>
<reference key="1">
    <citation type="journal article" date="2006" name="Lancet">
        <title>Complete genome sequence of USA300, an epidemic clone of community-acquired meticillin-resistant Staphylococcus aureus.</title>
        <authorList>
            <person name="Diep B.A."/>
            <person name="Gill S.R."/>
            <person name="Chang R.F."/>
            <person name="Phan T.H."/>
            <person name="Chen J.H."/>
            <person name="Davidson M.G."/>
            <person name="Lin F."/>
            <person name="Lin J."/>
            <person name="Carleton H.A."/>
            <person name="Mongodin E.F."/>
            <person name="Sensabaugh G.F."/>
            <person name="Perdreau-Remington F."/>
        </authorList>
    </citation>
    <scope>NUCLEOTIDE SEQUENCE [LARGE SCALE GENOMIC DNA]</scope>
    <source>
        <strain>USA300</strain>
    </source>
</reference>
<gene>
    <name evidence="1" type="primary">sucC</name>
    <name type="ordered locus">SAUSA300_1138</name>
</gene>
<evidence type="ECO:0000255" key="1">
    <source>
        <dbReference type="HAMAP-Rule" id="MF_00558"/>
    </source>
</evidence>
<feature type="chain" id="PRO_1000082243" description="Succinate--CoA ligase [ADP-forming] subunit beta">
    <location>
        <begin position="1"/>
        <end position="388"/>
    </location>
</feature>
<feature type="domain" description="ATP-grasp" evidence="1">
    <location>
        <begin position="9"/>
        <end position="244"/>
    </location>
</feature>
<feature type="binding site" evidence="1">
    <location>
        <position position="46"/>
    </location>
    <ligand>
        <name>ATP</name>
        <dbReference type="ChEBI" id="CHEBI:30616"/>
    </ligand>
</feature>
<feature type="binding site" evidence="1">
    <location>
        <begin position="53"/>
        <end position="55"/>
    </location>
    <ligand>
        <name>ATP</name>
        <dbReference type="ChEBI" id="CHEBI:30616"/>
    </ligand>
</feature>
<feature type="binding site" evidence="1">
    <location>
        <position position="99"/>
    </location>
    <ligand>
        <name>ATP</name>
        <dbReference type="ChEBI" id="CHEBI:30616"/>
    </ligand>
</feature>
<feature type="binding site" evidence="1">
    <location>
        <position position="102"/>
    </location>
    <ligand>
        <name>ATP</name>
        <dbReference type="ChEBI" id="CHEBI:30616"/>
    </ligand>
</feature>
<feature type="binding site" evidence="1">
    <location>
        <position position="107"/>
    </location>
    <ligand>
        <name>ATP</name>
        <dbReference type="ChEBI" id="CHEBI:30616"/>
    </ligand>
</feature>
<feature type="binding site" evidence="1">
    <location>
        <position position="199"/>
    </location>
    <ligand>
        <name>Mg(2+)</name>
        <dbReference type="ChEBI" id="CHEBI:18420"/>
    </ligand>
</feature>
<feature type="binding site" evidence="1">
    <location>
        <position position="213"/>
    </location>
    <ligand>
        <name>Mg(2+)</name>
        <dbReference type="ChEBI" id="CHEBI:18420"/>
    </ligand>
</feature>
<feature type="binding site" evidence="1">
    <location>
        <position position="264"/>
    </location>
    <ligand>
        <name>substrate</name>
        <note>ligand shared with subunit alpha</note>
    </ligand>
</feature>
<feature type="binding site" evidence="1">
    <location>
        <begin position="321"/>
        <end position="323"/>
    </location>
    <ligand>
        <name>substrate</name>
        <note>ligand shared with subunit alpha</note>
    </ligand>
</feature>
<keyword id="KW-0067">ATP-binding</keyword>
<keyword id="KW-0436">Ligase</keyword>
<keyword id="KW-0460">Magnesium</keyword>
<keyword id="KW-0479">Metal-binding</keyword>
<keyword id="KW-0547">Nucleotide-binding</keyword>
<keyword id="KW-0816">Tricarboxylic acid cycle</keyword>
<accession>Q2FHJ3</accession>
<protein>
    <recommendedName>
        <fullName evidence="1">Succinate--CoA ligase [ADP-forming] subunit beta</fullName>
        <ecNumber evidence="1">6.2.1.5</ecNumber>
    </recommendedName>
    <alternativeName>
        <fullName evidence="1">Succinyl-CoA synthetase subunit beta</fullName>
        <shortName evidence="1">SCS-beta</shortName>
    </alternativeName>
</protein>